<comment type="function">
    <text evidence="1">Catalyzes the reversible phosphorylation of UMP to UDP.</text>
</comment>
<comment type="catalytic activity">
    <reaction evidence="1">
        <text>UMP + ATP = UDP + ADP</text>
        <dbReference type="Rhea" id="RHEA:24400"/>
        <dbReference type="ChEBI" id="CHEBI:30616"/>
        <dbReference type="ChEBI" id="CHEBI:57865"/>
        <dbReference type="ChEBI" id="CHEBI:58223"/>
        <dbReference type="ChEBI" id="CHEBI:456216"/>
        <dbReference type="EC" id="2.7.4.22"/>
    </reaction>
</comment>
<comment type="activity regulation">
    <text evidence="1">Allosterically activated by GTP. Inhibited by UTP.</text>
</comment>
<comment type="pathway">
    <text evidence="1">Pyrimidine metabolism; CTP biosynthesis via de novo pathway; UDP from UMP (UMPK route): step 1/1.</text>
</comment>
<comment type="subunit">
    <text evidence="1">Homohexamer.</text>
</comment>
<comment type="subcellular location">
    <subcellularLocation>
        <location evidence="1">Cytoplasm</location>
    </subcellularLocation>
</comment>
<comment type="similarity">
    <text evidence="1">Belongs to the UMP kinase family.</text>
</comment>
<dbReference type="EC" id="2.7.4.22" evidence="1"/>
<dbReference type="EMBL" id="CP000671">
    <property type="protein sequence ID" value="ABQ98691.1"/>
    <property type="molecule type" value="Genomic_DNA"/>
</dbReference>
<dbReference type="SMR" id="A5UD40"/>
<dbReference type="KEGG" id="hip:CGSHiEE_06760"/>
<dbReference type="HOGENOM" id="CLU_033861_0_0_6"/>
<dbReference type="UniPathway" id="UPA00159">
    <property type="reaction ID" value="UER00275"/>
</dbReference>
<dbReference type="GO" id="GO:0005829">
    <property type="term" value="C:cytosol"/>
    <property type="evidence" value="ECO:0007669"/>
    <property type="project" value="TreeGrafter"/>
</dbReference>
<dbReference type="GO" id="GO:0005524">
    <property type="term" value="F:ATP binding"/>
    <property type="evidence" value="ECO:0007669"/>
    <property type="project" value="UniProtKB-KW"/>
</dbReference>
<dbReference type="GO" id="GO:0033862">
    <property type="term" value="F:UMP kinase activity"/>
    <property type="evidence" value="ECO:0007669"/>
    <property type="project" value="UniProtKB-EC"/>
</dbReference>
<dbReference type="GO" id="GO:0044210">
    <property type="term" value="P:'de novo' CTP biosynthetic process"/>
    <property type="evidence" value="ECO:0007669"/>
    <property type="project" value="UniProtKB-UniRule"/>
</dbReference>
<dbReference type="GO" id="GO:0006225">
    <property type="term" value="P:UDP biosynthetic process"/>
    <property type="evidence" value="ECO:0007669"/>
    <property type="project" value="TreeGrafter"/>
</dbReference>
<dbReference type="CDD" id="cd04254">
    <property type="entry name" value="AAK_UMPK-PyrH-Ec"/>
    <property type="match status" value="1"/>
</dbReference>
<dbReference type="FunFam" id="3.40.1160.10:FF:000001">
    <property type="entry name" value="Uridylate kinase"/>
    <property type="match status" value="1"/>
</dbReference>
<dbReference type="Gene3D" id="3.40.1160.10">
    <property type="entry name" value="Acetylglutamate kinase-like"/>
    <property type="match status" value="1"/>
</dbReference>
<dbReference type="HAMAP" id="MF_01220_B">
    <property type="entry name" value="PyrH_B"/>
    <property type="match status" value="1"/>
</dbReference>
<dbReference type="InterPro" id="IPR036393">
    <property type="entry name" value="AceGlu_kinase-like_sf"/>
</dbReference>
<dbReference type="InterPro" id="IPR001048">
    <property type="entry name" value="Asp/Glu/Uridylate_kinase"/>
</dbReference>
<dbReference type="InterPro" id="IPR011817">
    <property type="entry name" value="Uridylate_kinase"/>
</dbReference>
<dbReference type="InterPro" id="IPR015963">
    <property type="entry name" value="Uridylate_kinase_bac"/>
</dbReference>
<dbReference type="NCBIfam" id="TIGR02075">
    <property type="entry name" value="pyrH_bact"/>
    <property type="match status" value="1"/>
</dbReference>
<dbReference type="PANTHER" id="PTHR42833">
    <property type="entry name" value="URIDYLATE KINASE"/>
    <property type="match status" value="1"/>
</dbReference>
<dbReference type="PANTHER" id="PTHR42833:SF4">
    <property type="entry name" value="URIDYLATE KINASE PUMPKIN, CHLOROPLASTIC"/>
    <property type="match status" value="1"/>
</dbReference>
<dbReference type="Pfam" id="PF00696">
    <property type="entry name" value="AA_kinase"/>
    <property type="match status" value="1"/>
</dbReference>
<dbReference type="PIRSF" id="PIRSF005650">
    <property type="entry name" value="Uridylate_kin"/>
    <property type="match status" value="1"/>
</dbReference>
<dbReference type="SUPFAM" id="SSF53633">
    <property type="entry name" value="Carbamate kinase-like"/>
    <property type="match status" value="1"/>
</dbReference>
<accession>A5UD40</accession>
<protein>
    <recommendedName>
        <fullName evidence="1">Uridylate kinase</fullName>
        <shortName evidence="1">UK</shortName>
        <ecNumber evidence="1">2.7.4.22</ecNumber>
    </recommendedName>
    <alternativeName>
        <fullName evidence="1">Uridine monophosphate kinase</fullName>
        <shortName evidence="1">UMP kinase</shortName>
        <shortName evidence="1">UMPK</shortName>
    </alternativeName>
</protein>
<proteinExistence type="inferred from homology"/>
<name>PYRH_HAEIE</name>
<evidence type="ECO:0000255" key="1">
    <source>
        <dbReference type="HAMAP-Rule" id="MF_01220"/>
    </source>
</evidence>
<keyword id="KW-0021">Allosteric enzyme</keyword>
<keyword id="KW-0067">ATP-binding</keyword>
<keyword id="KW-0963">Cytoplasm</keyword>
<keyword id="KW-0418">Kinase</keyword>
<keyword id="KW-0547">Nucleotide-binding</keyword>
<keyword id="KW-0665">Pyrimidine biosynthesis</keyword>
<keyword id="KW-0808">Transferase</keyword>
<gene>
    <name evidence="1" type="primary">pyrH</name>
    <name type="ordered locus">CGSHiEE_06760</name>
</gene>
<feature type="chain" id="PRO_1000053929" description="Uridylate kinase">
    <location>
        <begin position="1"/>
        <end position="237"/>
    </location>
</feature>
<feature type="region of interest" description="Involved in allosteric activation by GTP" evidence="1">
    <location>
        <begin position="20"/>
        <end position="25"/>
    </location>
</feature>
<feature type="binding site" evidence="1">
    <location>
        <begin position="12"/>
        <end position="15"/>
    </location>
    <ligand>
        <name>ATP</name>
        <dbReference type="ChEBI" id="CHEBI:30616"/>
    </ligand>
</feature>
<feature type="binding site" evidence="1">
    <location>
        <position position="54"/>
    </location>
    <ligand>
        <name>UMP</name>
        <dbReference type="ChEBI" id="CHEBI:57865"/>
    </ligand>
</feature>
<feature type="binding site" evidence="1">
    <location>
        <position position="55"/>
    </location>
    <ligand>
        <name>ATP</name>
        <dbReference type="ChEBI" id="CHEBI:30616"/>
    </ligand>
</feature>
<feature type="binding site" evidence="1">
    <location>
        <position position="59"/>
    </location>
    <ligand>
        <name>ATP</name>
        <dbReference type="ChEBI" id="CHEBI:30616"/>
    </ligand>
</feature>
<feature type="binding site" evidence="1">
    <location>
        <position position="74"/>
    </location>
    <ligand>
        <name>UMP</name>
        <dbReference type="ChEBI" id="CHEBI:57865"/>
    </ligand>
</feature>
<feature type="binding site" evidence="1">
    <location>
        <begin position="135"/>
        <end position="142"/>
    </location>
    <ligand>
        <name>UMP</name>
        <dbReference type="ChEBI" id="CHEBI:57865"/>
    </ligand>
</feature>
<feature type="binding site" evidence="1">
    <location>
        <position position="162"/>
    </location>
    <ligand>
        <name>ATP</name>
        <dbReference type="ChEBI" id="CHEBI:30616"/>
    </ligand>
</feature>
<feature type="binding site" evidence="1">
    <location>
        <position position="168"/>
    </location>
    <ligand>
        <name>ATP</name>
        <dbReference type="ChEBI" id="CHEBI:30616"/>
    </ligand>
</feature>
<feature type="binding site" evidence="1">
    <location>
        <position position="171"/>
    </location>
    <ligand>
        <name>ATP</name>
        <dbReference type="ChEBI" id="CHEBI:30616"/>
    </ligand>
</feature>
<reference key="1">
    <citation type="journal article" date="2007" name="Genome Biol.">
        <title>Characterization and modeling of the Haemophilus influenzae core and supragenomes based on the complete genomic sequences of Rd and 12 clinical nontypeable strains.</title>
        <authorList>
            <person name="Hogg J.S."/>
            <person name="Hu F.Z."/>
            <person name="Janto B."/>
            <person name="Boissy R."/>
            <person name="Hayes J."/>
            <person name="Keefe R."/>
            <person name="Post J.C."/>
            <person name="Ehrlich G.D."/>
        </authorList>
    </citation>
    <scope>NUCLEOTIDE SEQUENCE [LARGE SCALE GENOMIC DNA]</scope>
    <source>
        <strain>PittEE</strain>
    </source>
</reference>
<organism>
    <name type="scientific">Haemophilus influenzae (strain PittEE)</name>
    <dbReference type="NCBI Taxonomy" id="374930"/>
    <lineage>
        <taxon>Bacteria</taxon>
        <taxon>Pseudomonadati</taxon>
        <taxon>Pseudomonadota</taxon>
        <taxon>Gammaproteobacteria</taxon>
        <taxon>Pasteurellales</taxon>
        <taxon>Pasteurellaceae</taxon>
        <taxon>Haemophilus</taxon>
    </lineage>
</organism>
<sequence length="237" mass="25680">MSQPIYKRILLKLSGEALQGEDGLGIDPAILDRMAVEIKELVEMGVEVGVVLGGGNLFRGAKLAKAGMNRVVGDHMGMLATVMNGLAMRDSLFRADVNAKLMSAFQLNGICDTYNWSEAIKMLREKRVVIFSAGTGNPFFTTDSTACLRGIEIEADVVLKATKVDGVYDCDPAKNPDAKLYKNLAYAEVIDKELQVMDLSAFTLARDHGMPIRVFNMGKPGALRQVVTGTEEGTTIC</sequence>